<reference key="1">
    <citation type="submission" date="2008-05" db="EMBL/GenBank/DDBJ databases">
        <title>Complete sequence of Chlorobium limicola DSM 245.</title>
        <authorList>
            <consortium name="US DOE Joint Genome Institute"/>
            <person name="Lucas S."/>
            <person name="Copeland A."/>
            <person name="Lapidus A."/>
            <person name="Glavina del Rio T."/>
            <person name="Dalin E."/>
            <person name="Tice H."/>
            <person name="Bruce D."/>
            <person name="Goodwin L."/>
            <person name="Pitluck S."/>
            <person name="Schmutz J."/>
            <person name="Larimer F."/>
            <person name="Land M."/>
            <person name="Hauser L."/>
            <person name="Kyrpides N."/>
            <person name="Ovchinnikova G."/>
            <person name="Zhao F."/>
            <person name="Li T."/>
            <person name="Liu Z."/>
            <person name="Overmann J."/>
            <person name="Bryant D.A."/>
            <person name="Richardson P."/>
        </authorList>
    </citation>
    <scope>NUCLEOTIDE SEQUENCE [LARGE SCALE GENOMIC DNA]</scope>
    <source>
        <strain>DSM 245 / NBRC 103803 / 6330</strain>
    </source>
</reference>
<dbReference type="EC" id="3.4.24.-" evidence="1"/>
<dbReference type="EMBL" id="CP001097">
    <property type="protein sequence ID" value="ACD90506.1"/>
    <property type="molecule type" value="Genomic_DNA"/>
</dbReference>
<dbReference type="RefSeq" id="WP_012466383.1">
    <property type="nucleotide sequence ID" value="NC_010803.1"/>
</dbReference>
<dbReference type="SMR" id="B3ED81"/>
<dbReference type="STRING" id="290315.Clim_1447"/>
<dbReference type="MEROPS" id="M48.002"/>
<dbReference type="KEGG" id="cli:Clim_1447"/>
<dbReference type="eggNOG" id="COG0501">
    <property type="taxonomic scope" value="Bacteria"/>
</dbReference>
<dbReference type="HOGENOM" id="CLU_042266_1_0_10"/>
<dbReference type="OrthoDB" id="9810445at2"/>
<dbReference type="Proteomes" id="UP000008841">
    <property type="component" value="Chromosome"/>
</dbReference>
<dbReference type="GO" id="GO:0005886">
    <property type="term" value="C:plasma membrane"/>
    <property type="evidence" value="ECO:0007669"/>
    <property type="project" value="UniProtKB-SubCell"/>
</dbReference>
<dbReference type="GO" id="GO:0004222">
    <property type="term" value="F:metalloendopeptidase activity"/>
    <property type="evidence" value="ECO:0007669"/>
    <property type="project" value="UniProtKB-UniRule"/>
</dbReference>
<dbReference type="GO" id="GO:0008270">
    <property type="term" value="F:zinc ion binding"/>
    <property type="evidence" value="ECO:0007669"/>
    <property type="project" value="UniProtKB-UniRule"/>
</dbReference>
<dbReference type="GO" id="GO:0006508">
    <property type="term" value="P:proteolysis"/>
    <property type="evidence" value="ECO:0007669"/>
    <property type="project" value="UniProtKB-KW"/>
</dbReference>
<dbReference type="CDD" id="cd07335">
    <property type="entry name" value="M48B_HtpX_like"/>
    <property type="match status" value="1"/>
</dbReference>
<dbReference type="Gene3D" id="3.30.2010.10">
    <property type="entry name" value="Metalloproteases ('zincins'), catalytic domain"/>
    <property type="match status" value="1"/>
</dbReference>
<dbReference type="HAMAP" id="MF_00188">
    <property type="entry name" value="Pept_M48_protease_HtpX"/>
    <property type="match status" value="1"/>
</dbReference>
<dbReference type="InterPro" id="IPR050083">
    <property type="entry name" value="HtpX_protease"/>
</dbReference>
<dbReference type="InterPro" id="IPR022919">
    <property type="entry name" value="Pept_M48_protease_HtpX"/>
</dbReference>
<dbReference type="InterPro" id="IPR001915">
    <property type="entry name" value="Peptidase_M48"/>
</dbReference>
<dbReference type="NCBIfam" id="NF003965">
    <property type="entry name" value="PRK05457.1"/>
    <property type="match status" value="1"/>
</dbReference>
<dbReference type="PANTHER" id="PTHR43221">
    <property type="entry name" value="PROTEASE HTPX"/>
    <property type="match status" value="1"/>
</dbReference>
<dbReference type="PANTHER" id="PTHR43221:SF1">
    <property type="entry name" value="PROTEASE HTPX"/>
    <property type="match status" value="1"/>
</dbReference>
<dbReference type="Pfam" id="PF01435">
    <property type="entry name" value="Peptidase_M48"/>
    <property type="match status" value="1"/>
</dbReference>
<dbReference type="PROSITE" id="PS00142">
    <property type="entry name" value="ZINC_PROTEASE"/>
    <property type="match status" value="1"/>
</dbReference>
<organism>
    <name type="scientific">Chlorobium limicola (strain DSM 245 / NBRC 103803 / 6330)</name>
    <dbReference type="NCBI Taxonomy" id="290315"/>
    <lineage>
        <taxon>Bacteria</taxon>
        <taxon>Pseudomonadati</taxon>
        <taxon>Chlorobiota</taxon>
        <taxon>Chlorobiia</taxon>
        <taxon>Chlorobiales</taxon>
        <taxon>Chlorobiaceae</taxon>
        <taxon>Chlorobium/Pelodictyon group</taxon>
        <taxon>Chlorobium</taxon>
    </lineage>
</organism>
<sequence length="291" mass="30952">MKRVVLFLLTNLAVMLVLSVSARILGVDRFLTSNGLDMGMLLVFAALIGFGGSFISLLMSKTMAKWSTGARVIERPANQDEAWLVDTVRQLSKKAGLQMPEVAIYDGAPNAFATGPSKSRSLVAVSTGLMQSMNKKEVGAVLAHEVAHIQNGDMVTLTLIQGVVNTFVIFLSRLAAYAVDSFLRRDDDESGSPGIGYWISSIAFEIMFGILASVVVMCFSRKREYRADAGAAALMGDRAPMIDALRALGGLEAGRLPKEMAASGIAGGGMMALFSSHPPLESRIAALESAS</sequence>
<comment type="cofactor">
    <cofactor evidence="1">
        <name>Zn(2+)</name>
        <dbReference type="ChEBI" id="CHEBI:29105"/>
    </cofactor>
    <text evidence="1">Binds 1 zinc ion per subunit.</text>
</comment>
<comment type="subcellular location">
    <subcellularLocation>
        <location evidence="1">Cell inner membrane</location>
        <topology evidence="1">Multi-pass membrane protein</topology>
    </subcellularLocation>
</comment>
<comment type="similarity">
    <text evidence="1">Belongs to the peptidase M48B family.</text>
</comment>
<feature type="chain" id="PRO_1000098814" description="Protease HtpX homolog">
    <location>
        <begin position="1"/>
        <end position="291"/>
    </location>
</feature>
<feature type="transmembrane region" description="Helical" evidence="1">
    <location>
        <begin position="4"/>
        <end position="24"/>
    </location>
</feature>
<feature type="transmembrane region" description="Helical" evidence="1">
    <location>
        <begin position="38"/>
        <end position="58"/>
    </location>
</feature>
<feature type="transmembrane region" description="Helical" evidence="1">
    <location>
        <begin position="152"/>
        <end position="172"/>
    </location>
</feature>
<feature type="transmembrane region" description="Helical" evidence="1">
    <location>
        <begin position="199"/>
        <end position="219"/>
    </location>
</feature>
<feature type="active site" evidence="1">
    <location>
        <position position="145"/>
    </location>
</feature>
<feature type="binding site" evidence="1">
    <location>
        <position position="144"/>
    </location>
    <ligand>
        <name>Zn(2+)</name>
        <dbReference type="ChEBI" id="CHEBI:29105"/>
        <note>catalytic</note>
    </ligand>
</feature>
<feature type="binding site" evidence="1">
    <location>
        <position position="148"/>
    </location>
    <ligand>
        <name>Zn(2+)</name>
        <dbReference type="ChEBI" id="CHEBI:29105"/>
        <note>catalytic</note>
    </ligand>
</feature>
<feature type="binding site" evidence="1">
    <location>
        <position position="224"/>
    </location>
    <ligand>
        <name>Zn(2+)</name>
        <dbReference type="ChEBI" id="CHEBI:29105"/>
        <note>catalytic</note>
    </ligand>
</feature>
<keyword id="KW-0997">Cell inner membrane</keyword>
<keyword id="KW-1003">Cell membrane</keyword>
<keyword id="KW-0378">Hydrolase</keyword>
<keyword id="KW-0472">Membrane</keyword>
<keyword id="KW-0479">Metal-binding</keyword>
<keyword id="KW-0482">Metalloprotease</keyword>
<keyword id="KW-0645">Protease</keyword>
<keyword id="KW-0812">Transmembrane</keyword>
<keyword id="KW-1133">Transmembrane helix</keyword>
<keyword id="KW-0862">Zinc</keyword>
<gene>
    <name evidence="1" type="primary">htpX</name>
    <name type="ordered locus">Clim_1447</name>
</gene>
<name>HTPX_CHLL2</name>
<proteinExistence type="inferred from homology"/>
<accession>B3ED81</accession>
<evidence type="ECO:0000255" key="1">
    <source>
        <dbReference type="HAMAP-Rule" id="MF_00188"/>
    </source>
</evidence>
<protein>
    <recommendedName>
        <fullName evidence="1">Protease HtpX homolog</fullName>
        <ecNumber evidence="1">3.4.24.-</ecNumber>
    </recommendedName>
</protein>